<dbReference type="EC" id="7.1.2.2" evidence="1"/>
<dbReference type="EMBL" id="BA000004">
    <property type="protein sequence ID" value="BAB07473.1"/>
    <property type="molecule type" value="Genomic_DNA"/>
</dbReference>
<dbReference type="PIR" id="B84119">
    <property type="entry name" value="B84119"/>
</dbReference>
<dbReference type="RefSeq" id="WP_010899879.1">
    <property type="nucleotide sequence ID" value="NC_002570.2"/>
</dbReference>
<dbReference type="SMR" id="Q9K6H5"/>
<dbReference type="STRING" id="272558.gene:10729667"/>
<dbReference type="GeneID" id="87599301"/>
<dbReference type="KEGG" id="bha:BH3754"/>
<dbReference type="eggNOG" id="COG0055">
    <property type="taxonomic scope" value="Bacteria"/>
</dbReference>
<dbReference type="HOGENOM" id="CLU_022398_0_2_9"/>
<dbReference type="OrthoDB" id="9801639at2"/>
<dbReference type="Proteomes" id="UP000001258">
    <property type="component" value="Chromosome"/>
</dbReference>
<dbReference type="GO" id="GO:0005886">
    <property type="term" value="C:plasma membrane"/>
    <property type="evidence" value="ECO:0007669"/>
    <property type="project" value="UniProtKB-SubCell"/>
</dbReference>
<dbReference type="GO" id="GO:0045259">
    <property type="term" value="C:proton-transporting ATP synthase complex"/>
    <property type="evidence" value="ECO:0007669"/>
    <property type="project" value="UniProtKB-KW"/>
</dbReference>
<dbReference type="GO" id="GO:0005524">
    <property type="term" value="F:ATP binding"/>
    <property type="evidence" value="ECO:0007669"/>
    <property type="project" value="UniProtKB-UniRule"/>
</dbReference>
<dbReference type="GO" id="GO:0016887">
    <property type="term" value="F:ATP hydrolysis activity"/>
    <property type="evidence" value="ECO:0007669"/>
    <property type="project" value="InterPro"/>
</dbReference>
<dbReference type="GO" id="GO:0046933">
    <property type="term" value="F:proton-transporting ATP synthase activity, rotational mechanism"/>
    <property type="evidence" value="ECO:0007669"/>
    <property type="project" value="UniProtKB-UniRule"/>
</dbReference>
<dbReference type="CDD" id="cd18110">
    <property type="entry name" value="ATP-synt_F1_beta_C"/>
    <property type="match status" value="1"/>
</dbReference>
<dbReference type="CDD" id="cd18115">
    <property type="entry name" value="ATP-synt_F1_beta_N"/>
    <property type="match status" value="1"/>
</dbReference>
<dbReference type="CDD" id="cd01133">
    <property type="entry name" value="F1-ATPase_beta_CD"/>
    <property type="match status" value="1"/>
</dbReference>
<dbReference type="FunFam" id="1.10.1140.10:FF:000001">
    <property type="entry name" value="ATP synthase subunit beta"/>
    <property type="match status" value="1"/>
</dbReference>
<dbReference type="FunFam" id="2.40.10.170:FF:000005">
    <property type="entry name" value="ATP synthase subunit beta"/>
    <property type="match status" value="1"/>
</dbReference>
<dbReference type="FunFam" id="3.40.50.300:FF:000004">
    <property type="entry name" value="ATP synthase subunit beta"/>
    <property type="match status" value="1"/>
</dbReference>
<dbReference type="Gene3D" id="2.40.10.170">
    <property type="match status" value="1"/>
</dbReference>
<dbReference type="Gene3D" id="1.10.1140.10">
    <property type="entry name" value="Bovine Mitochondrial F1-atpase, Atp Synthase Beta Chain, Chain D, domain 3"/>
    <property type="match status" value="1"/>
</dbReference>
<dbReference type="Gene3D" id="3.40.50.300">
    <property type="entry name" value="P-loop containing nucleotide triphosphate hydrolases"/>
    <property type="match status" value="1"/>
</dbReference>
<dbReference type="HAMAP" id="MF_01347">
    <property type="entry name" value="ATP_synth_beta_bact"/>
    <property type="match status" value="1"/>
</dbReference>
<dbReference type="InterPro" id="IPR003593">
    <property type="entry name" value="AAA+_ATPase"/>
</dbReference>
<dbReference type="InterPro" id="IPR055190">
    <property type="entry name" value="ATP-synt_VA_C"/>
</dbReference>
<dbReference type="InterPro" id="IPR005722">
    <property type="entry name" value="ATP_synth_F1_bsu"/>
</dbReference>
<dbReference type="InterPro" id="IPR020003">
    <property type="entry name" value="ATPase_a/bsu_AS"/>
</dbReference>
<dbReference type="InterPro" id="IPR050053">
    <property type="entry name" value="ATPase_alpha/beta_chains"/>
</dbReference>
<dbReference type="InterPro" id="IPR004100">
    <property type="entry name" value="ATPase_F1/V1/A1_a/bsu_N"/>
</dbReference>
<dbReference type="InterPro" id="IPR036121">
    <property type="entry name" value="ATPase_F1/V1/A1_a/bsu_N_sf"/>
</dbReference>
<dbReference type="InterPro" id="IPR000194">
    <property type="entry name" value="ATPase_F1/V1/A1_a/bsu_nucl-bd"/>
</dbReference>
<dbReference type="InterPro" id="IPR024034">
    <property type="entry name" value="ATPase_F1/V1_b/a_C"/>
</dbReference>
<dbReference type="InterPro" id="IPR027417">
    <property type="entry name" value="P-loop_NTPase"/>
</dbReference>
<dbReference type="NCBIfam" id="TIGR01039">
    <property type="entry name" value="atpD"/>
    <property type="match status" value="1"/>
</dbReference>
<dbReference type="PANTHER" id="PTHR15184">
    <property type="entry name" value="ATP SYNTHASE"/>
    <property type="match status" value="1"/>
</dbReference>
<dbReference type="PANTHER" id="PTHR15184:SF71">
    <property type="entry name" value="ATP SYNTHASE SUBUNIT BETA, MITOCHONDRIAL"/>
    <property type="match status" value="1"/>
</dbReference>
<dbReference type="Pfam" id="PF00006">
    <property type="entry name" value="ATP-synt_ab"/>
    <property type="match status" value="1"/>
</dbReference>
<dbReference type="Pfam" id="PF02874">
    <property type="entry name" value="ATP-synt_ab_N"/>
    <property type="match status" value="1"/>
</dbReference>
<dbReference type="Pfam" id="PF22919">
    <property type="entry name" value="ATP-synt_VA_C"/>
    <property type="match status" value="1"/>
</dbReference>
<dbReference type="SMART" id="SM00382">
    <property type="entry name" value="AAA"/>
    <property type="match status" value="1"/>
</dbReference>
<dbReference type="SUPFAM" id="SSF47917">
    <property type="entry name" value="C-terminal domain of alpha and beta subunits of F1 ATP synthase"/>
    <property type="match status" value="1"/>
</dbReference>
<dbReference type="SUPFAM" id="SSF50615">
    <property type="entry name" value="N-terminal domain of alpha and beta subunits of F1 ATP synthase"/>
    <property type="match status" value="1"/>
</dbReference>
<dbReference type="SUPFAM" id="SSF52540">
    <property type="entry name" value="P-loop containing nucleoside triphosphate hydrolases"/>
    <property type="match status" value="1"/>
</dbReference>
<dbReference type="PROSITE" id="PS00152">
    <property type="entry name" value="ATPASE_ALPHA_BETA"/>
    <property type="match status" value="1"/>
</dbReference>
<accession>Q9K6H5</accession>
<protein>
    <recommendedName>
        <fullName evidence="1">ATP synthase subunit beta</fullName>
        <ecNumber evidence="1">7.1.2.2</ecNumber>
    </recommendedName>
    <alternativeName>
        <fullName evidence="1">ATP synthase F1 sector subunit beta</fullName>
    </alternativeName>
    <alternativeName>
        <fullName evidence="1">F-ATPase subunit beta</fullName>
    </alternativeName>
</protein>
<keyword id="KW-0066">ATP synthesis</keyword>
<keyword id="KW-0067">ATP-binding</keyword>
<keyword id="KW-1003">Cell membrane</keyword>
<keyword id="KW-0139">CF(1)</keyword>
<keyword id="KW-0375">Hydrogen ion transport</keyword>
<keyword id="KW-0406">Ion transport</keyword>
<keyword id="KW-0472">Membrane</keyword>
<keyword id="KW-0547">Nucleotide-binding</keyword>
<keyword id="KW-1185">Reference proteome</keyword>
<keyword id="KW-1278">Translocase</keyword>
<keyword id="KW-0813">Transport</keyword>
<organism>
    <name type="scientific">Halalkalibacterium halodurans (strain ATCC BAA-125 / DSM 18197 / FERM 7344 / JCM 9153 / C-125)</name>
    <name type="common">Bacillus halodurans</name>
    <dbReference type="NCBI Taxonomy" id="272558"/>
    <lineage>
        <taxon>Bacteria</taxon>
        <taxon>Bacillati</taxon>
        <taxon>Bacillota</taxon>
        <taxon>Bacilli</taxon>
        <taxon>Bacillales</taxon>
        <taxon>Bacillaceae</taxon>
        <taxon>Halalkalibacterium (ex Joshi et al. 2022)</taxon>
    </lineage>
</organism>
<feature type="chain" id="PRO_0000144420" description="ATP synthase subunit beta">
    <location>
        <begin position="1"/>
        <end position="470"/>
    </location>
</feature>
<feature type="binding site" evidence="1">
    <location>
        <begin position="158"/>
        <end position="165"/>
    </location>
    <ligand>
        <name>ATP</name>
        <dbReference type="ChEBI" id="CHEBI:30616"/>
    </ligand>
</feature>
<reference key="1">
    <citation type="journal article" date="2000" name="Nucleic Acids Res.">
        <title>Complete genome sequence of the alkaliphilic bacterium Bacillus halodurans and genomic sequence comparison with Bacillus subtilis.</title>
        <authorList>
            <person name="Takami H."/>
            <person name="Nakasone K."/>
            <person name="Takaki Y."/>
            <person name="Maeno G."/>
            <person name="Sasaki R."/>
            <person name="Masui N."/>
            <person name="Fuji F."/>
            <person name="Hirama C."/>
            <person name="Nakamura Y."/>
            <person name="Ogasawara N."/>
            <person name="Kuhara S."/>
            <person name="Horikoshi K."/>
        </authorList>
    </citation>
    <scope>NUCLEOTIDE SEQUENCE [LARGE SCALE GENOMIC DNA]</scope>
    <source>
        <strain>ATCC BAA-125 / DSM 18197 / FERM 7344 / JCM 9153 / C-125</strain>
    </source>
</reference>
<name>ATPB_HALH5</name>
<comment type="function">
    <text evidence="1">Produces ATP from ADP in the presence of a proton gradient across the membrane. The catalytic sites are hosted primarily by the beta subunits.</text>
</comment>
<comment type="catalytic activity">
    <reaction evidence="1">
        <text>ATP + H2O + 4 H(+)(in) = ADP + phosphate + 5 H(+)(out)</text>
        <dbReference type="Rhea" id="RHEA:57720"/>
        <dbReference type="ChEBI" id="CHEBI:15377"/>
        <dbReference type="ChEBI" id="CHEBI:15378"/>
        <dbReference type="ChEBI" id="CHEBI:30616"/>
        <dbReference type="ChEBI" id="CHEBI:43474"/>
        <dbReference type="ChEBI" id="CHEBI:456216"/>
        <dbReference type="EC" id="7.1.2.2"/>
    </reaction>
</comment>
<comment type="subunit">
    <text evidence="1">F-type ATPases have 2 components, CF(1) - the catalytic core - and CF(0) - the membrane proton channel. CF(1) has five subunits: alpha(3), beta(3), gamma(1), delta(1), epsilon(1). CF(0) has three main subunits: a(1), b(2) and c(9-12). The alpha and beta chains form an alternating ring which encloses part of the gamma chain. CF(1) is attached to CF(0) by a central stalk formed by the gamma and epsilon chains, while a peripheral stalk is formed by the delta and b chains.</text>
</comment>
<comment type="subcellular location">
    <subcellularLocation>
        <location evidence="1">Cell membrane</location>
        <topology evidence="1">Peripheral membrane protein</topology>
    </subcellularLocation>
</comment>
<comment type="similarity">
    <text evidence="1">Belongs to the ATPase alpha/beta chains family.</text>
</comment>
<gene>
    <name evidence="1" type="primary">atpD</name>
    <name type="ordered locus">BH3754</name>
</gene>
<proteinExistence type="inferred from homology"/>
<sequence length="470" mass="51215">MNTGHITQVMGPVVDVRFQSGQLPELNNALRVEQKGADQNAVDVNVTLEVALHLGDDTVRTIAMGSTDGLVRGTEVVDTGAAISVPVGEVTLGRVFNVLGESIDLDEPIPADAERSPIHREAPKFEELSTKTEILETGIKVVDLLAPYIKGGKIGLFGGAGVGKTVLIQELINNIAQEHGGISVFAGVGERTREGNDLYHEMSDSGVIKKTAMVFGQMNEPPGARMRVALSGLTMAEYFRDKQGQDVLLFIDNIFRFTQAGSEVSALLGRMPSAVGYQPTLATEMGQLQERITSTKVGSVTSIQAIYVPADDYTDPAPATTFAHLDATTNLERKLSEMGIYPAVDPLASTSRALSPEIVGEEHYNVARQVQQTLQKYKELQDIIAILGMDELSEEDKLIVARARRIQFFLSQNFHVAEQFTGQPGSYVPVKETIKGFKEILEGKYDDLPEDAFRLVGRIEEVVERAKQMV</sequence>
<evidence type="ECO:0000255" key="1">
    <source>
        <dbReference type="HAMAP-Rule" id="MF_01347"/>
    </source>
</evidence>